<sequence>MPREIITLQLGQCGNQIGFEFWKQLCAEHGISPEGIVEEFATEGTDRKDVFFYQADDEHYIPRAVLLDLEPRVIHSILNSPYAKLYNPENIYLSEHGGGAGNNWASGFSQGEKIHEDIFDIIDREADGSDSLEGFVLCHSIAGGTGSGLGSYLLERLNDRYPKKLVQTYSVFPNQDEMSDVVVQPYNSLLTLKRLTQNADCVVVLDNTALNRIATDRLHIQNPSFSQINQLVSTIMSASTTTLRYPGYMNNDLIGLIASLIPTPRLHFLMTGYTPLTTDQSVASVRKTTVLDVMRRLLQPKNVMVSTGRDRQTNHCYIAILNIIQGEVDPTQVHKSLQRIRERKLANFIPWGPASIQVALSRKSPYLPSAHRVSGLMMANHTSISSLFESSCQQYDKLRKREAFLEQFRKEDIFKDNFDELDRSREVVQELIDEYHAATRPDYISWGTQEQ</sequence>
<accession>Q32KM1</accession>
<proteinExistence type="evidence at transcript level"/>
<dbReference type="EMBL" id="BC110028">
    <property type="protein sequence ID" value="AAI10029.1"/>
    <property type="molecule type" value="mRNA"/>
</dbReference>
<dbReference type="RefSeq" id="NP_001032704.1">
    <property type="nucleotide sequence ID" value="NM_001037615.2"/>
</dbReference>
<dbReference type="SMR" id="Q32KM1"/>
<dbReference type="FunCoup" id="Q32KM1">
    <property type="interactions" value="1903"/>
</dbReference>
<dbReference type="STRING" id="9913.ENSBTAP00000040455"/>
<dbReference type="PaxDb" id="9913-ENSBTAP00000040455"/>
<dbReference type="GeneID" id="540216"/>
<dbReference type="KEGG" id="bta:540216"/>
<dbReference type="CTD" id="27175"/>
<dbReference type="VEuPathDB" id="HostDB:ENSBTAG00000030347"/>
<dbReference type="eggNOG" id="KOG1374">
    <property type="taxonomic scope" value="Eukaryota"/>
</dbReference>
<dbReference type="HOGENOM" id="CLU_015718_1_0_1"/>
<dbReference type="InParanoid" id="Q32KM1"/>
<dbReference type="OMA" id="QTYSIFP"/>
<dbReference type="OrthoDB" id="10249382at2759"/>
<dbReference type="TreeFam" id="TF300477"/>
<dbReference type="Reactome" id="R-BTA-380270">
    <property type="pathway name" value="Recruitment of mitotic centrosome proteins and complexes"/>
</dbReference>
<dbReference type="Reactome" id="R-BTA-380320">
    <property type="pathway name" value="Recruitment of NuMA to mitotic centrosomes"/>
</dbReference>
<dbReference type="Proteomes" id="UP000009136">
    <property type="component" value="Chromosome 19"/>
</dbReference>
<dbReference type="Bgee" id="ENSBTAG00000030347">
    <property type="expression patterns" value="Expressed in oocyte and 104 other cell types or tissues"/>
</dbReference>
<dbReference type="GO" id="GO:0005813">
    <property type="term" value="C:centrosome"/>
    <property type="evidence" value="ECO:0000318"/>
    <property type="project" value="GO_Central"/>
</dbReference>
<dbReference type="GO" id="GO:0005737">
    <property type="term" value="C:cytoplasm"/>
    <property type="evidence" value="ECO:0000318"/>
    <property type="project" value="GO_Central"/>
</dbReference>
<dbReference type="GO" id="GO:0005881">
    <property type="term" value="C:cytoplasmic microtubule"/>
    <property type="evidence" value="ECO:0007669"/>
    <property type="project" value="Ensembl"/>
</dbReference>
<dbReference type="GO" id="GO:0000931">
    <property type="term" value="C:gamma-tubulin ring complex"/>
    <property type="evidence" value="ECO:0000318"/>
    <property type="project" value="GO_Central"/>
</dbReference>
<dbReference type="GO" id="GO:0005634">
    <property type="term" value="C:nucleus"/>
    <property type="evidence" value="ECO:0000318"/>
    <property type="project" value="GO_Central"/>
</dbReference>
<dbReference type="GO" id="GO:0000242">
    <property type="term" value="C:pericentriolar material"/>
    <property type="evidence" value="ECO:0007669"/>
    <property type="project" value="Ensembl"/>
</dbReference>
<dbReference type="GO" id="GO:0005819">
    <property type="term" value="C:spindle"/>
    <property type="evidence" value="ECO:0000318"/>
    <property type="project" value="GO_Central"/>
</dbReference>
<dbReference type="GO" id="GO:0005876">
    <property type="term" value="C:spindle microtubule"/>
    <property type="evidence" value="ECO:0007669"/>
    <property type="project" value="Ensembl"/>
</dbReference>
<dbReference type="GO" id="GO:0005525">
    <property type="term" value="F:GTP binding"/>
    <property type="evidence" value="ECO:0000318"/>
    <property type="project" value="GO_Central"/>
</dbReference>
<dbReference type="GO" id="GO:0140490">
    <property type="term" value="F:microtubule nucleator activity"/>
    <property type="evidence" value="ECO:0000318"/>
    <property type="project" value="GO_Central"/>
</dbReference>
<dbReference type="GO" id="GO:0031122">
    <property type="term" value="P:cytoplasmic microtubule organization"/>
    <property type="evidence" value="ECO:0007669"/>
    <property type="project" value="InterPro"/>
</dbReference>
<dbReference type="GO" id="GO:0000212">
    <property type="term" value="P:meiotic spindle organization"/>
    <property type="evidence" value="ECO:0000318"/>
    <property type="project" value="GO_Central"/>
</dbReference>
<dbReference type="GO" id="GO:0007020">
    <property type="term" value="P:microtubule nucleation"/>
    <property type="evidence" value="ECO:0000318"/>
    <property type="project" value="GO_Central"/>
</dbReference>
<dbReference type="GO" id="GO:0000278">
    <property type="term" value="P:mitotic cell cycle"/>
    <property type="evidence" value="ECO:0000318"/>
    <property type="project" value="GO_Central"/>
</dbReference>
<dbReference type="GO" id="GO:0000070">
    <property type="term" value="P:mitotic sister chromatid segregation"/>
    <property type="evidence" value="ECO:0000318"/>
    <property type="project" value="GO_Central"/>
</dbReference>
<dbReference type="GO" id="GO:0007052">
    <property type="term" value="P:mitotic spindle organization"/>
    <property type="evidence" value="ECO:0000318"/>
    <property type="project" value="GO_Central"/>
</dbReference>
<dbReference type="CDD" id="cd02188">
    <property type="entry name" value="gamma_tubulin"/>
    <property type="match status" value="1"/>
</dbReference>
<dbReference type="FunFam" id="1.10.287.600:FF:000004">
    <property type="entry name" value="Tubulin gamma chain"/>
    <property type="match status" value="1"/>
</dbReference>
<dbReference type="FunFam" id="3.30.1330.20:FF:000003">
    <property type="entry name" value="Tubulin gamma chain"/>
    <property type="match status" value="1"/>
</dbReference>
<dbReference type="FunFam" id="3.40.50.1440:FF:000010">
    <property type="entry name" value="Tubulin gamma chain"/>
    <property type="match status" value="1"/>
</dbReference>
<dbReference type="Gene3D" id="1.10.287.600">
    <property type="entry name" value="Helix hairpin bin"/>
    <property type="match status" value="1"/>
</dbReference>
<dbReference type="Gene3D" id="3.30.1330.20">
    <property type="entry name" value="Tubulin/FtsZ, C-terminal domain"/>
    <property type="match status" value="1"/>
</dbReference>
<dbReference type="Gene3D" id="3.40.50.1440">
    <property type="entry name" value="Tubulin/FtsZ, GTPase domain"/>
    <property type="match status" value="1"/>
</dbReference>
<dbReference type="InterPro" id="IPR002454">
    <property type="entry name" value="Gamma_tubulin"/>
</dbReference>
<dbReference type="InterPro" id="IPR008280">
    <property type="entry name" value="Tub_FtsZ_C"/>
</dbReference>
<dbReference type="InterPro" id="IPR000217">
    <property type="entry name" value="Tubulin"/>
</dbReference>
<dbReference type="InterPro" id="IPR037103">
    <property type="entry name" value="Tubulin/FtsZ-like_C"/>
</dbReference>
<dbReference type="InterPro" id="IPR018316">
    <property type="entry name" value="Tubulin/FtsZ_2-layer-sand-dom"/>
</dbReference>
<dbReference type="InterPro" id="IPR036525">
    <property type="entry name" value="Tubulin/FtsZ_GTPase_sf"/>
</dbReference>
<dbReference type="InterPro" id="IPR023123">
    <property type="entry name" value="Tubulin_C"/>
</dbReference>
<dbReference type="InterPro" id="IPR017975">
    <property type="entry name" value="Tubulin_CS"/>
</dbReference>
<dbReference type="InterPro" id="IPR003008">
    <property type="entry name" value="Tubulin_FtsZ_GTPase"/>
</dbReference>
<dbReference type="PANTHER" id="PTHR11588">
    <property type="entry name" value="TUBULIN"/>
    <property type="match status" value="1"/>
</dbReference>
<dbReference type="Pfam" id="PF00091">
    <property type="entry name" value="Tubulin"/>
    <property type="match status" value="1"/>
</dbReference>
<dbReference type="Pfam" id="PF03953">
    <property type="entry name" value="Tubulin_C"/>
    <property type="match status" value="1"/>
</dbReference>
<dbReference type="PRINTS" id="PR01164">
    <property type="entry name" value="GAMMATUBULIN"/>
</dbReference>
<dbReference type="PRINTS" id="PR01161">
    <property type="entry name" value="TUBULIN"/>
</dbReference>
<dbReference type="SMART" id="SM00864">
    <property type="entry name" value="Tubulin"/>
    <property type="match status" value="1"/>
</dbReference>
<dbReference type="SMART" id="SM00865">
    <property type="entry name" value="Tubulin_C"/>
    <property type="match status" value="1"/>
</dbReference>
<dbReference type="SUPFAM" id="SSF55307">
    <property type="entry name" value="Tubulin C-terminal domain-like"/>
    <property type="match status" value="1"/>
</dbReference>
<dbReference type="SUPFAM" id="SSF52490">
    <property type="entry name" value="Tubulin nucleotide-binding domain-like"/>
    <property type="match status" value="1"/>
</dbReference>
<dbReference type="PROSITE" id="PS00227">
    <property type="entry name" value="TUBULIN"/>
    <property type="match status" value="1"/>
</dbReference>
<protein>
    <recommendedName>
        <fullName>Tubulin gamma-2 chain</fullName>
    </recommendedName>
    <alternativeName>
        <fullName>Gamma-2-tubulin</fullName>
    </alternativeName>
</protein>
<comment type="function">
    <text evidence="2">Tubulin is the major constituent of microtubules, protein filaments consisting of alpha- and beta-tubulin heterodimers (By similarity). Gamma-tubulin is a key component of the gamma-tubulin ring complex (gTuRC) which mediates microtubule nucleation (By similarity). The gTuRC regulates the minus-end nucleation of alpha-beta tubulin heterodimers that grow into microtubule protafilaments, a critical step in centrosome duplication and spindle formation (By similarity).</text>
</comment>
<comment type="subunit">
    <text evidence="2">Component of the gamma-tubulin ring complex (gTuRC) consisting of TUBGCP2, TUBGCP3, TUBGCP4, TUBGCP5 and TUBGCP6 and gamma-tubulin TUBG1 or TUBG2 (By similarity). TUBGCP2, TUBGCP3, TUBGCP4, TUBGCP5 and TUBGCP6 assemble in a 5:5:2:1:1 stoichiometry; each is associated with a gamma-tubulin, thereby arranging 14 gamma-tubulins in a helical manner (By similarity). Gamma-tubulin at the first position is blocked by TUBGCP3 at the last position, allowing 13 protafilaments to grow into a microtubule (By similarity). Interacts with alpha-beta tubulin heterodimers; the interaction allows microtubules to nucleate from the gTuRC (By similarity).</text>
</comment>
<comment type="subcellular location">
    <subcellularLocation>
        <location evidence="1">Cytoplasm</location>
        <location evidence="1">Cytoskeleton</location>
        <location evidence="1">Microtubule organizing center</location>
        <location evidence="1">Centrosome</location>
    </subcellularLocation>
</comment>
<comment type="PTM">
    <text>Phosphorylation at Ser-131 by BRSK1 regulates centrosome duplication, possibly by mediating relocation of gamma-tubulin and its associated proteins from the cytoplasm to the centrosome.</text>
</comment>
<comment type="similarity">
    <text evidence="4">Belongs to the tubulin family.</text>
</comment>
<name>TBG2_BOVIN</name>
<reference key="1">
    <citation type="submission" date="2005-11" db="EMBL/GenBank/DDBJ databases">
        <authorList>
            <consortium name="NIH - Mammalian Gene Collection (MGC) project"/>
        </authorList>
    </citation>
    <scope>NUCLEOTIDE SEQUENCE [LARGE SCALE MRNA]</scope>
    <source>
        <strain>Crossbred X Angus</strain>
        <tissue>Liver</tissue>
    </source>
</reference>
<evidence type="ECO:0000250" key="1">
    <source>
        <dbReference type="UniProtKB" id="Q8VCK3"/>
    </source>
</evidence>
<evidence type="ECO:0000250" key="2">
    <source>
        <dbReference type="UniProtKB" id="Q9NRH3"/>
    </source>
</evidence>
<evidence type="ECO:0000255" key="3"/>
<evidence type="ECO:0000305" key="4"/>
<keyword id="KW-0963">Cytoplasm</keyword>
<keyword id="KW-0206">Cytoskeleton</keyword>
<keyword id="KW-0342">GTP-binding</keyword>
<keyword id="KW-0493">Microtubule</keyword>
<keyword id="KW-0547">Nucleotide-binding</keyword>
<keyword id="KW-0597">Phosphoprotein</keyword>
<keyword id="KW-1185">Reference proteome</keyword>
<gene>
    <name type="primary">TUBG2</name>
</gene>
<feature type="chain" id="PRO_0000288847" description="Tubulin gamma-2 chain">
    <location>
        <begin position="1"/>
        <end position="451"/>
    </location>
</feature>
<feature type="binding site" evidence="3">
    <location>
        <begin position="142"/>
        <end position="148"/>
    </location>
    <ligand>
        <name>GTP</name>
        <dbReference type="ChEBI" id="CHEBI:37565"/>
    </ligand>
</feature>
<feature type="modified residue" description="Phosphoserine; by BRSK1" evidence="1">
    <location>
        <position position="131"/>
    </location>
</feature>
<organism>
    <name type="scientific">Bos taurus</name>
    <name type="common">Bovine</name>
    <dbReference type="NCBI Taxonomy" id="9913"/>
    <lineage>
        <taxon>Eukaryota</taxon>
        <taxon>Metazoa</taxon>
        <taxon>Chordata</taxon>
        <taxon>Craniata</taxon>
        <taxon>Vertebrata</taxon>
        <taxon>Euteleostomi</taxon>
        <taxon>Mammalia</taxon>
        <taxon>Eutheria</taxon>
        <taxon>Laurasiatheria</taxon>
        <taxon>Artiodactyla</taxon>
        <taxon>Ruminantia</taxon>
        <taxon>Pecora</taxon>
        <taxon>Bovidae</taxon>
        <taxon>Bovinae</taxon>
        <taxon>Bos</taxon>
    </lineage>
</organism>